<organism>
    <name type="scientific">Aquifex aeolicus (strain VF5)</name>
    <dbReference type="NCBI Taxonomy" id="224324"/>
    <lineage>
        <taxon>Bacteria</taxon>
        <taxon>Pseudomonadati</taxon>
        <taxon>Aquificota</taxon>
        <taxon>Aquificia</taxon>
        <taxon>Aquificales</taxon>
        <taxon>Aquificaceae</taxon>
        <taxon>Aquifex</taxon>
    </lineage>
</organism>
<dbReference type="EC" id="2.3.3.13" evidence="1"/>
<dbReference type="EMBL" id="AE000657">
    <property type="protein sequence ID" value="AAC07824.1"/>
    <property type="status" value="ALT_INIT"/>
    <property type="molecule type" value="Genomic_DNA"/>
</dbReference>
<dbReference type="PIR" id="B70479">
    <property type="entry name" value="B70479"/>
</dbReference>
<dbReference type="RefSeq" id="NP_214431.1">
    <property type="nucleotide sequence ID" value="NC_000918.1"/>
</dbReference>
<dbReference type="RefSeq" id="WP_164930807.1">
    <property type="nucleotide sequence ID" value="NC_000918.1"/>
</dbReference>
<dbReference type="SMR" id="O67862"/>
<dbReference type="FunCoup" id="O67862">
    <property type="interactions" value="412"/>
</dbReference>
<dbReference type="STRING" id="224324.aq_2090"/>
<dbReference type="EnsemblBacteria" id="AAC07824">
    <property type="protein sequence ID" value="AAC07824"/>
    <property type="gene ID" value="aq_2090"/>
</dbReference>
<dbReference type="KEGG" id="aae:aq_2090"/>
<dbReference type="PATRIC" id="fig|224324.8.peg.1611"/>
<dbReference type="eggNOG" id="COG0119">
    <property type="taxonomic scope" value="Bacteria"/>
</dbReference>
<dbReference type="HOGENOM" id="CLU_022158_0_1_0"/>
<dbReference type="InParanoid" id="O67862"/>
<dbReference type="OrthoDB" id="9804858at2"/>
<dbReference type="UniPathway" id="UPA00048">
    <property type="reaction ID" value="UER00070"/>
</dbReference>
<dbReference type="Proteomes" id="UP000000798">
    <property type="component" value="Chromosome"/>
</dbReference>
<dbReference type="GO" id="GO:0005737">
    <property type="term" value="C:cytoplasm"/>
    <property type="evidence" value="ECO:0007669"/>
    <property type="project" value="UniProtKB-SubCell"/>
</dbReference>
<dbReference type="GO" id="GO:0003852">
    <property type="term" value="F:2-isopropylmalate synthase activity"/>
    <property type="evidence" value="ECO:0000318"/>
    <property type="project" value="GO_Central"/>
</dbReference>
<dbReference type="GO" id="GO:0003985">
    <property type="term" value="F:acetyl-CoA C-acetyltransferase activity"/>
    <property type="evidence" value="ECO:0007669"/>
    <property type="project" value="UniProtKB-UniRule"/>
</dbReference>
<dbReference type="GO" id="GO:0030145">
    <property type="term" value="F:manganese ion binding"/>
    <property type="evidence" value="ECO:0007669"/>
    <property type="project" value="UniProtKB-UniRule"/>
</dbReference>
<dbReference type="GO" id="GO:0009098">
    <property type="term" value="P:L-leucine biosynthetic process"/>
    <property type="evidence" value="ECO:0000318"/>
    <property type="project" value="GO_Central"/>
</dbReference>
<dbReference type="CDD" id="cd07940">
    <property type="entry name" value="DRE_TIM_IPMS"/>
    <property type="match status" value="1"/>
</dbReference>
<dbReference type="FunFam" id="1.10.238.260:FF:000001">
    <property type="entry name" value="2-isopropylmalate synthase"/>
    <property type="match status" value="1"/>
</dbReference>
<dbReference type="FunFam" id="3.20.20.70:FF:000010">
    <property type="entry name" value="2-isopropylmalate synthase"/>
    <property type="match status" value="1"/>
</dbReference>
<dbReference type="FunFam" id="3.30.160.270:FF:000001">
    <property type="entry name" value="2-isopropylmalate synthase"/>
    <property type="match status" value="1"/>
</dbReference>
<dbReference type="Gene3D" id="1.10.238.260">
    <property type="match status" value="1"/>
</dbReference>
<dbReference type="Gene3D" id="3.30.160.270">
    <property type="match status" value="1"/>
</dbReference>
<dbReference type="Gene3D" id="3.20.20.70">
    <property type="entry name" value="Aldolase class I"/>
    <property type="match status" value="1"/>
</dbReference>
<dbReference type="HAMAP" id="MF_01025">
    <property type="entry name" value="LeuA_type1"/>
    <property type="match status" value="1"/>
</dbReference>
<dbReference type="InterPro" id="IPR050073">
    <property type="entry name" value="2-IPM_HCS-like"/>
</dbReference>
<dbReference type="InterPro" id="IPR013709">
    <property type="entry name" value="2-isopropylmalate_synth_dimer"/>
</dbReference>
<dbReference type="InterPro" id="IPR002034">
    <property type="entry name" value="AIPM/Hcit_synth_CS"/>
</dbReference>
<dbReference type="InterPro" id="IPR013785">
    <property type="entry name" value="Aldolase_TIM"/>
</dbReference>
<dbReference type="InterPro" id="IPR054691">
    <property type="entry name" value="LeuA/HCS_post-cat"/>
</dbReference>
<dbReference type="InterPro" id="IPR036230">
    <property type="entry name" value="LeuA_allosteric_dom_sf"/>
</dbReference>
<dbReference type="InterPro" id="IPR005671">
    <property type="entry name" value="LeuA_bact_synth"/>
</dbReference>
<dbReference type="InterPro" id="IPR000891">
    <property type="entry name" value="PYR_CT"/>
</dbReference>
<dbReference type="NCBIfam" id="TIGR00973">
    <property type="entry name" value="leuA_bact"/>
    <property type="match status" value="1"/>
</dbReference>
<dbReference type="NCBIfam" id="NF002085">
    <property type="entry name" value="PRK00915.1-2"/>
    <property type="match status" value="1"/>
</dbReference>
<dbReference type="NCBIfam" id="NF002086">
    <property type="entry name" value="PRK00915.1-3"/>
    <property type="match status" value="1"/>
</dbReference>
<dbReference type="NCBIfam" id="NF002087">
    <property type="entry name" value="PRK00915.1-4"/>
    <property type="match status" value="1"/>
</dbReference>
<dbReference type="PANTHER" id="PTHR10277:SF9">
    <property type="entry name" value="2-ISOPROPYLMALATE SYNTHASE 1, CHLOROPLASTIC-RELATED"/>
    <property type="match status" value="1"/>
</dbReference>
<dbReference type="PANTHER" id="PTHR10277">
    <property type="entry name" value="HOMOCITRATE SYNTHASE-RELATED"/>
    <property type="match status" value="1"/>
</dbReference>
<dbReference type="Pfam" id="PF22617">
    <property type="entry name" value="HCS_D2"/>
    <property type="match status" value="1"/>
</dbReference>
<dbReference type="Pfam" id="PF00682">
    <property type="entry name" value="HMGL-like"/>
    <property type="match status" value="1"/>
</dbReference>
<dbReference type="Pfam" id="PF08502">
    <property type="entry name" value="LeuA_dimer"/>
    <property type="match status" value="1"/>
</dbReference>
<dbReference type="SMART" id="SM00917">
    <property type="entry name" value="LeuA_dimer"/>
    <property type="match status" value="1"/>
</dbReference>
<dbReference type="SUPFAM" id="SSF110921">
    <property type="entry name" value="2-isopropylmalate synthase LeuA, allosteric (dimerisation) domain"/>
    <property type="match status" value="1"/>
</dbReference>
<dbReference type="SUPFAM" id="SSF51569">
    <property type="entry name" value="Aldolase"/>
    <property type="match status" value="1"/>
</dbReference>
<dbReference type="PROSITE" id="PS00815">
    <property type="entry name" value="AIPM_HOMOCIT_SYNTH_1"/>
    <property type="match status" value="1"/>
</dbReference>
<dbReference type="PROSITE" id="PS00816">
    <property type="entry name" value="AIPM_HOMOCIT_SYNTH_2"/>
    <property type="match status" value="1"/>
</dbReference>
<dbReference type="PROSITE" id="PS50991">
    <property type="entry name" value="PYR_CT"/>
    <property type="match status" value="1"/>
</dbReference>
<evidence type="ECO:0000255" key="1">
    <source>
        <dbReference type="HAMAP-Rule" id="MF_01025"/>
    </source>
</evidence>
<evidence type="ECO:0000305" key="2"/>
<sequence>MGEKVYIFDTTLRDGEQAPGFSMTTEEKLQMAHQLAKLNVDIIEAGFAAASKGDFEAVNRIAKEVKGPVICSLARALESDIEIAAKALEPAERKRIHTFIATSPIHMEYKLRMTPDQVLERIKKAVSFARNFTDDVEFSCEDATRSEREFLYRAIETAIKHGATVINIPDTVGYAIPEEFGQLIEDIMNNVPNIDKVILSVHCHDDLGLATANSLTAVKHGARQVECTINGIGERAGNAALEEVVMALKVRKDFFGDLYTDVNTKEIYKTSRLLCRITGNFVQPNKAIVGDNAFAHESGIHQHGVLSHRMTYEIMNPEDVGFPMSRIVLGKHSGRHALKRRLEELGFKFTKEELDRIFEKFKELADRKKEVYDEDLEALIYQEFMKIEDHEPVKVLHFQVQSGDNMIPTATVKLEFKGEEREASSTGNGPVDATIKAIQKALGIEPKLLDYSIKALTPNTDAQAEARVVLELDGVKASGRGVDTDIIKASVKAFTDALNRAIVRKEYIIQRQEIREEGTV</sequence>
<protein>
    <recommendedName>
        <fullName evidence="1">2-isopropylmalate synthase</fullName>
        <ecNumber evidence="1">2.3.3.13</ecNumber>
    </recommendedName>
    <alternativeName>
        <fullName evidence="1">Alpha-IPM synthase</fullName>
    </alternativeName>
    <alternativeName>
        <fullName evidence="1">Alpha-isopropylmalate synthase</fullName>
    </alternativeName>
</protein>
<name>LEU1_AQUAE</name>
<keyword id="KW-0028">Amino-acid biosynthesis</keyword>
<keyword id="KW-0100">Branched-chain amino acid biosynthesis</keyword>
<keyword id="KW-0963">Cytoplasm</keyword>
<keyword id="KW-0432">Leucine biosynthesis</keyword>
<keyword id="KW-0464">Manganese</keyword>
<keyword id="KW-0479">Metal-binding</keyword>
<keyword id="KW-1185">Reference proteome</keyword>
<keyword id="KW-0808">Transferase</keyword>
<reference key="1">
    <citation type="journal article" date="1998" name="Nature">
        <title>The complete genome of the hyperthermophilic bacterium Aquifex aeolicus.</title>
        <authorList>
            <person name="Deckert G."/>
            <person name="Warren P.V."/>
            <person name="Gaasterland T."/>
            <person name="Young W.G."/>
            <person name="Lenox A.L."/>
            <person name="Graham D.E."/>
            <person name="Overbeek R."/>
            <person name="Snead M.A."/>
            <person name="Keller M."/>
            <person name="Aujay M."/>
            <person name="Huber R."/>
            <person name="Feldman R.A."/>
            <person name="Short J.M."/>
            <person name="Olsen G.J."/>
            <person name="Swanson R.V."/>
        </authorList>
    </citation>
    <scope>NUCLEOTIDE SEQUENCE [LARGE SCALE GENOMIC DNA]</scope>
    <source>
        <strain>VF5</strain>
    </source>
</reference>
<feature type="chain" id="PRO_0000140328" description="2-isopropylmalate synthase">
    <location>
        <begin position="1"/>
        <end position="520"/>
    </location>
</feature>
<feature type="domain" description="Pyruvate carboxyltransferase" evidence="1">
    <location>
        <begin position="5"/>
        <end position="268"/>
    </location>
</feature>
<feature type="region of interest" description="Regulatory domain" evidence="1">
    <location>
        <begin position="394"/>
        <end position="520"/>
    </location>
</feature>
<feature type="binding site" evidence="1">
    <location>
        <position position="14"/>
    </location>
    <ligand>
        <name>Mn(2+)</name>
        <dbReference type="ChEBI" id="CHEBI:29035"/>
    </ligand>
</feature>
<feature type="binding site" evidence="1">
    <location>
        <position position="202"/>
    </location>
    <ligand>
        <name>Mn(2+)</name>
        <dbReference type="ChEBI" id="CHEBI:29035"/>
    </ligand>
</feature>
<feature type="binding site" evidence="1">
    <location>
        <position position="204"/>
    </location>
    <ligand>
        <name>Mn(2+)</name>
        <dbReference type="ChEBI" id="CHEBI:29035"/>
    </ligand>
</feature>
<feature type="binding site" evidence="1">
    <location>
        <position position="238"/>
    </location>
    <ligand>
        <name>Mn(2+)</name>
        <dbReference type="ChEBI" id="CHEBI:29035"/>
    </ligand>
</feature>
<comment type="function">
    <text evidence="1">Catalyzes the condensation of the acetyl group of acetyl-CoA with 3-methyl-2-oxobutanoate (2-ketoisovalerate) to form 3-carboxy-3-hydroxy-4-methylpentanoate (2-isopropylmalate).</text>
</comment>
<comment type="catalytic activity">
    <reaction evidence="1">
        <text>3-methyl-2-oxobutanoate + acetyl-CoA + H2O = (2S)-2-isopropylmalate + CoA + H(+)</text>
        <dbReference type="Rhea" id="RHEA:21524"/>
        <dbReference type="ChEBI" id="CHEBI:1178"/>
        <dbReference type="ChEBI" id="CHEBI:11851"/>
        <dbReference type="ChEBI" id="CHEBI:15377"/>
        <dbReference type="ChEBI" id="CHEBI:15378"/>
        <dbReference type="ChEBI" id="CHEBI:57287"/>
        <dbReference type="ChEBI" id="CHEBI:57288"/>
        <dbReference type="EC" id="2.3.3.13"/>
    </reaction>
</comment>
<comment type="cofactor">
    <cofactor evidence="1">
        <name>Mn(2+)</name>
        <dbReference type="ChEBI" id="CHEBI:29035"/>
    </cofactor>
</comment>
<comment type="pathway">
    <text evidence="1">Amino-acid biosynthesis; L-leucine biosynthesis; L-leucine from 3-methyl-2-oxobutanoate: step 1/4.</text>
</comment>
<comment type="subunit">
    <text evidence="1">Homodimer.</text>
</comment>
<comment type="subcellular location">
    <subcellularLocation>
        <location evidence="1">Cytoplasm</location>
    </subcellularLocation>
</comment>
<comment type="similarity">
    <text evidence="1 2">Belongs to the alpha-IPM synthase/homocitrate synthase family. LeuA type 1 subfamily.</text>
</comment>
<comment type="sequence caution" evidence="2">
    <conflict type="erroneous initiation">
        <sequence resource="EMBL-CDS" id="AAC07824"/>
    </conflict>
    <text>Extended N-terminus.</text>
</comment>
<gene>
    <name evidence="1" type="primary">leuA</name>
    <name type="ordered locus">aq_2090</name>
</gene>
<accession>O67862</accession>
<proteinExistence type="inferred from homology"/>